<organism>
    <name type="scientific">Haemophilus influenzae (strain 86-028NP)</name>
    <dbReference type="NCBI Taxonomy" id="281310"/>
    <lineage>
        <taxon>Bacteria</taxon>
        <taxon>Pseudomonadati</taxon>
        <taxon>Pseudomonadota</taxon>
        <taxon>Gammaproteobacteria</taxon>
        <taxon>Pasteurellales</taxon>
        <taxon>Pasteurellaceae</taxon>
        <taxon>Haemophilus</taxon>
    </lineage>
</organism>
<evidence type="ECO:0000255" key="1">
    <source>
        <dbReference type="HAMAP-Rule" id="MF_01719"/>
    </source>
</evidence>
<dbReference type="EC" id="7.4.2.11" evidence="1"/>
<dbReference type="EMBL" id="CP000057">
    <property type="protein sequence ID" value="AAX87773.1"/>
    <property type="molecule type" value="Genomic_DNA"/>
</dbReference>
<dbReference type="RefSeq" id="WP_005648552.1">
    <property type="nucleotide sequence ID" value="NC_007146.2"/>
</dbReference>
<dbReference type="SMR" id="Q4QMH4"/>
<dbReference type="GeneID" id="93219755"/>
<dbReference type="KEGG" id="hit:NTHI0879"/>
<dbReference type="HOGENOM" id="CLU_000604_1_3_6"/>
<dbReference type="Proteomes" id="UP000002525">
    <property type="component" value="Chromosome"/>
</dbReference>
<dbReference type="GO" id="GO:0009276">
    <property type="term" value="C:Gram-negative-bacterium-type cell wall"/>
    <property type="evidence" value="ECO:0007669"/>
    <property type="project" value="InterPro"/>
</dbReference>
<dbReference type="GO" id="GO:0005886">
    <property type="term" value="C:plasma membrane"/>
    <property type="evidence" value="ECO:0007669"/>
    <property type="project" value="UniProtKB-SubCell"/>
</dbReference>
<dbReference type="GO" id="GO:0033232">
    <property type="term" value="F:ABC-type D-methionine transporter activity"/>
    <property type="evidence" value="ECO:0007669"/>
    <property type="project" value="UniProtKB-EC"/>
</dbReference>
<dbReference type="GO" id="GO:0005524">
    <property type="term" value="F:ATP binding"/>
    <property type="evidence" value="ECO:0007669"/>
    <property type="project" value="UniProtKB-KW"/>
</dbReference>
<dbReference type="GO" id="GO:0016887">
    <property type="term" value="F:ATP hydrolysis activity"/>
    <property type="evidence" value="ECO:0007669"/>
    <property type="project" value="InterPro"/>
</dbReference>
<dbReference type="CDD" id="cd03258">
    <property type="entry name" value="ABC_MetN_methionine_transporter"/>
    <property type="match status" value="1"/>
</dbReference>
<dbReference type="FunFam" id="3.40.50.300:FF:000233">
    <property type="entry name" value="Methionine import ATP-binding protein MetN"/>
    <property type="match status" value="1"/>
</dbReference>
<dbReference type="Gene3D" id="3.30.70.260">
    <property type="match status" value="1"/>
</dbReference>
<dbReference type="Gene3D" id="3.40.50.300">
    <property type="entry name" value="P-loop containing nucleotide triphosphate hydrolases"/>
    <property type="match status" value="1"/>
</dbReference>
<dbReference type="InterPro" id="IPR003593">
    <property type="entry name" value="AAA+_ATPase"/>
</dbReference>
<dbReference type="InterPro" id="IPR012692">
    <property type="entry name" value="ABC_MetN_proteobac"/>
</dbReference>
<dbReference type="InterPro" id="IPR003439">
    <property type="entry name" value="ABC_transporter-like_ATP-bd"/>
</dbReference>
<dbReference type="InterPro" id="IPR017871">
    <property type="entry name" value="ABC_transporter-like_CS"/>
</dbReference>
<dbReference type="InterPro" id="IPR045865">
    <property type="entry name" value="ACT-like_dom_sf"/>
</dbReference>
<dbReference type="InterPro" id="IPR041701">
    <property type="entry name" value="MetN_ABC"/>
</dbReference>
<dbReference type="InterPro" id="IPR050086">
    <property type="entry name" value="MetN_ABC_transporter-like"/>
</dbReference>
<dbReference type="InterPro" id="IPR018449">
    <property type="entry name" value="NIL_domain"/>
</dbReference>
<dbReference type="InterPro" id="IPR027417">
    <property type="entry name" value="P-loop_NTPase"/>
</dbReference>
<dbReference type="NCBIfam" id="TIGR02314">
    <property type="entry name" value="ABC_MetN"/>
    <property type="match status" value="1"/>
</dbReference>
<dbReference type="PANTHER" id="PTHR43166">
    <property type="entry name" value="AMINO ACID IMPORT ATP-BINDING PROTEIN"/>
    <property type="match status" value="1"/>
</dbReference>
<dbReference type="PANTHER" id="PTHR43166:SF30">
    <property type="entry name" value="METHIONINE IMPORT ATP-BINDING PROTEIN METN"/>
    <property type="match status" value="1"/>
</dbReference>
<dbReference type="Pfam" id="PF00005">
    <property type="entry name" value="ABC_tran"/>
    <property type="match status" value="1"/>
</dbReference>
<dbReference type="Pfam" id="PF09383">
    <property type="entry name" value="NIL"/>
    <property type="match status" value="1"/>
</dbReference>
<dbReference type="SMART" id="SM00382">
    <property type="entry name" value="AAA"/>
    <property type="match status" value="1"/>
</dbReference>
<dbReference type="SMART" id="SM00930">
    <property type="entry name" value="NIL"/>
    <property type="match status" value="1"/>
</dbReference>
<dbReference type="SUPFAM" id="SSF55021">
    <property type="entry name" value="ACT-like"/>
    <property type="match status" value="1"/>
</dbReference>
<dbReference type="SUPFAM" id="SSF52540">
    <property type="entry name" value="P-loop containing nucleoside triphosphate hydrolases"/>
    <property type="match status" value="1"/>
</dbReference>
<dbReference type="PROSITE" id="PS00211">
    <property type="entry name" value="ABC_TRANSPORTER_1"/>
    <property type="match status" value="1"/>
</dbReference>
<dbReference type="PROSITE" id="PS50893">
    <property type="entry name" value="ABC_TRANSPORTER_2"/>
    <property type="match status" value="1"/>
</dbReference>
<dbReference type="PROSITE" id="PS51264">
    <property type="entry name" value="METN"/>
    <property type="match status" value="1"/>
</dbReference>
<keyword id="KW-0029">Amino-acid transport</keyword>
<keyword id="KW-0067">ATP-binding</keyword>
<keyword id="KW-0997">Cell inner membrane</keyword>
<keyword id="KW-1003">Cell membrane</keyword>
<keyword id="KW-0472">Membrane</keyword>
<keyword id="KW-0547">Nucleotide-binding</keyword>
<keyword id="KW-1278">Translocase</keyword>
<keyword id="KW-0813">Transport</keyword>
<gene>
    <name evidence="1" type="primary">metN</name>
    <name type="ordered locus">NTHI0879</name>
</gene>
<feature type="chain" id="PRO_0000270307" description="Methionine import ATP-binding protein MetN">
    <location>
        <begin position="1"/>
        <end position="345"/>
    </location>
</feature>
<feature type="domain" description="ABC transporter" evidence="1">
    <location>
        <begin position="2"/>
        <end position="241"/>
    </location>
</feature>
<feature type="binding site" evidence="1">
    <location>
        <begin position="38"/>
        <end position="45"/>
    </location>
    <ligand>
        <name>ATP</name>
        <dbReference type="ChEBI" id="CHEBI:30616"/>
    </ligand>
</feature>
<accession>Q4QMH4</accession>
<reference key="1">
    <citation type="journal article" date="2005" name="J. Bacteriol.">
        <title>Genomic sequence of an otitis media isolate of nontypeable Haemophilus influenzae: comparative study with H. influenzae serotype d, strain KW20.</title>
        <authorList>
            <person name="Harrison A."/>
            <person name="Dyer D.W."/>
            <person name="Gillaspy A."/>
            <person name="Ray W.C."/>
            <person name="Mungur R."/>
            <person name="Carson M.B."/>
            <person name="Zhong H."/>
            <person name="Gipson J."/>
            <person name="Gipson M."/>
            <person name="Johnson L.S."/>
            <person name="Lewis L."/>
            <person name="Bakaletz L.O."/>
            <person name="Munson R.S. Jr."/>
        </authorList>
    </citation>
    <scope>NUCLEOTIDE SEQUENCE [LARGE SCALE GENOMIC DNA]</scope>
    <source>
        <strain>86-028NP</strain>
    </source>
</reference>
<proteinExistence type="inferred from homology"/>
<protein>
    <recommendedName>
        <fullName evidence="1">Methionine import ATP-binding protein MetN</fullName>
        <ecNumber evidence="1">7.4.2.11</ecNumber>
    </recommendedName>
</protein>
<sequence>MIKLNNITKIFELPNKKLTALDNVSLNIEKGQICGVIGASGAGKSTLIRCVNLLEKPTSGSVIVDGVELTKLSDRELVLARRQIGMIFQHFNLLSSRTVFENVALPLELESESKAKIQEKITALLDLVGLSEKRDAYPSNLSGGQKQRVAIARALASDPKVLLCDEATSALDPATTQSILQLLKEINRTLGITILLITHEMEVVKQICDQVAVIDQGRLVEQGTVGEIFANPKTELAQEFIRSTFHISLPDEYLENLTDTPKHSKAYPIIKFEFTGRSVDAPLLSQASKKFGVELSILTSQIDYAGGVKFGYTIAEVEGDEDAITQTKVYLMENNVRVEVLGYVQ</sequence>
<comment type="function">
    <text evidence="1">Part of the ABC transporter complex MetNIQ involved in methionine import. Responsible for energy coupling to the transport system.</text>
</comment>
<comment type="catalytic activity">
    <reaction evidence="1">
        <text>L-methionine(out) + ATP + H2O = L-methionine(in) + ADP + phosphate + H(+)</text>
        <dbReference type="Rhea" id="RHEA:29779"/>
        <dbReference type="ChEBI" id="CHEBI:15377"/>
        <dbReference type="ChEBI" id="CHEBI:15378"/>
        <dbReference type="ChEBI" id="CHEBI:30616"/>
        <dbReference type="ChEBI" id="CHEBI:43474"/>
        <dbReference type="ChEBI" id="CHEBI:57844"/>
        <dbReference type="ChEBI" id="CHEBI:456216"/>
        <dbReference type="EC" id="7.4.2.11"/>
    </reaction>
</comment>
<comment type="catalytic activity">
    <reaction evidence="1">
        <text>D-methionine(out) + ATP + H2O = D-methionine(in) + ADP + phosphate + H(+)</text>
        <dbReference type="Rhea" id="RHEA:29767"/>
        <dbReference type="ChEBI" id="CHEBI:15377"/>
        <dbReference type="ChEBI" id="CHEBI:15378"/>
        <dbReference type="ChEBI" id="CHEBI:30616"/>
        <dbReference type="ChEBI" id="CHEBI:43474"/>
        <dbReference type="ChEBI" id="CHEBI:57932"/>
        <dbReference type="ChEBI" id="CHEBI:456216"/>
        <dbReference type="EC" id="7.4.2.11"/>
    </reaction>
</comment>
<comment type="subunit">
    <text evidence="1">The complex is composed of two ATP-binding proteins (MetN), two transmembrane proteins (MetI) and a solute-binding protein (MetQ).</text>
</comment>
<comment type="subcellular location">
    <subcellularLocation>
        <location evidence="1">Cell inner membrane</location>
        <topology evidence="1">Peripheral membrane protein</topology>
    </subcellularLocation>
</comment>
<comment type="similarity">
    <text evidence="1">Belongs to the ABC transporter superfamily. Methionine importer (TC 3.A.1.24) family.</text>
</comment>
<name>METN_HAEI8</name>